<sequence length="95" mass="10704">MLHTLHRSPWLTDFAALLRLLSEGDELLLLQDGVTAAVDGNRYLESLRNAPIKVYALNEDLIARGLIGQISNDIIPIDYTDFVRLTVKHSSQMAW</sequence>
<comment type="function">
    <text evidence="1">Part of a sulfur-relay system required for 2-thiolation of 5-methylaminomethyl-2-thiouridine (mnm(5)s(2)U) at tRNA wobble positions.</text>
</comment>
<comment type="subunit">
    <text evidence="1">Heterohexamer, formed by a dimer of trimers. The hexameric TusBCD complex contains 2 copies each of TusB, TusC and TusD. The TusBCD complex interacts with TusE.</text>
</comment>
<comment type="subcellular location">
    <subcellularLocation>
        <location evidence="1">Cytoplasm</location>
    </subcellularLocation>
</comment>
<comment type="similarity">
    <text evidence="1">Belongs to the DsrH/TusB family.</text>
</comment>
<proteinExistence type="inferred from homology"/>
<organism>
    <name type="scientific">Shigella dysenteriae serotype 1 (strain Sd197)</name>
    <dbReference type="NCBI Taxonomy" id="300267"/>
    <lineage>
        <taxon>Bacteria</taxon>
        <taxon>Pseudomonadati</taxon>
        <taxon>Pseudomonadota</taxon>
        <taxon>Gammaproteobacteria</taxon>
        <taxon>Enterobacterales</taxon>
        <taxon>Enterobacteriaceae</taxon>
        <taxon>Shigella</taxon>
    </lineage>
</organism>
<accession>Q32B23</accession>
<reference key="1">
    <citation type="journal article" date="2005" name="Nucleic Acids Res.">
        <title>Genome dynamics and diversity of Shigella species, the etiologic agents of bacillary dysentery.</title>
        <authorList>
            <person name="Yang F."/>
            <person name="Yang J."/>
            <person name="Zhang X."/>
            <person name="Chen L."/>
            <person name="Jiang Y."/>
            <person name="Yan Y."/>
            <person name="Tang X."/>
            <person name="Wang J."/>
            <person name="Xiong Z."/>
            <person name="Dong J."/>
            <person name="Xue Y."/>
            <person name="Zhu Y."/>
            <person name="Xu X."/>
            <person name="Sun L."/>
            <person name="Chen S."/>
            <person name="Nie H."/>
            <person name="Peng J."/>
            <person name="Xu J."/>
            <person name="Wang Y."/>
            <person name="Yuan Z."/>
            <person name="Wen Y."/>
            <person name="Yao Z."/>
            <person name="Shen Y."/>
            <person name="Qiang B."/>
            <person name="Hou Y."/>
            <person name="Yu J."/>
            <person name="Jin Q."/>
        </authorList>
    </citation>
    <scope>NUCLEOTIDE SEQUENCE [LARGE SCALE GENOMIC DNA]</scope>
    <source>
        <strain>Sd197</strain>
    </source>
</reference>
<gene>
    <name evidence="1" type="primary">tusB</name>
    <name type="ordered locus">SDY_3504</name>
</gene>
<protein>
    <recommendedName>
        <fullName evidence="1">Protein TusB</fullName>
    </recommendedName>
    <alternativeName>
        <fullName evidence="1">tRNA 2-thiouridine synthesizing protein B</fullName>
    </alternativeName>
</protein>
<evidence type="ECO:0000255" key="1">
    <source>
        <dbReference type="HAMAP-Rule" id="MF_01564"/>
    </source>
</evidence>
<feature type="chain" id="PRO_0000234521" description="Protein TusB">
    <location>
        <begin position="1"/>
        <end position="95"/>
    </location>
</feature>
<dbReference type="EMBL" id="CP000034">
    <property type="protein sequence ID" value="ABB63482.1"/>
    <property type="molecule type" value="Genomic_DNA"/>
</dbReference>
<dbReference type="RefSeq" id="WP_000903371.1">
    <property type="nucleotide sequence ID" value="NC_007606.1"/>
</dbReference>
<dbReference type="RefSeq" id="YP_404973.1">
    <property type="nucleotide sequence ID" value="NC_007606.1"/>
</dbReference>
<dbReference type="SMR" id="Q32B23"/>
<dbReference type="STRING" id="300267.SDY_3504"/>
<dbReference type="EnsemblBacteria" id="ABB63482">
    <property type="protein sequence ID" value="ABB63482"/>
    <property type="gene ID" value="SDY_3504"/>
</dbReference>
<dbReference type="KEGG" id="sdy:SDY_3504"/>
<dbReference type="PATRIC" id="fig|300267.13.peg.4158"/>
<dbReference type="HOGENOM" id="CLU_166087_2_1_6"/>
<dbReference type="Proteomes" id="UP000002716">
    <property type="component" value="Chromosome"/>
</dbReference>
<dbReference type="GO" id="GO:1990228">
    <property type="term" value="C:sulfurtransferase complex"/>
    <property type="evidence" value="ECO:0007669"/>
    <property type="project" value="TreeGrafter"/>
</dbReference>
<dbReference type="GO" id="GO:0002143">
    <property type="term" value="P:tRNA wobble position uridine thiolation"/>
    <property type="evidence" value="ECO:0007669"/>
    <property type="project" value="InterPro"/>
</dbReference>
<dbReference type="FunFam" id="3.40.1260.10:FF:000002">
    <property type="entry name" value="Sulfurtransferase TusB"/>
    <property type="match status" value="1"/>
</dbReference>
<dbReference type="Gene3D" id="3.40.1260.10">
    <property type="entry name" value="DsrEFH-like"/>
    <property type="match status" value="1"/>
</dbReference>
<dbReference type="HAMAP" id="MF_01564">
    <property type="entry name" value="Thiourid_synth_B"/>
    <property type="match status" value="1"/>
</dbReference>
<dbReference type="InterPro" id="IPR027396">
    <property type="entry name" value="DsrEFH-like"/>
</dbReference>
<dbReference type="InterPro" id="IPR023526">
    <property type="entry name" value="Sulphur_relay_TusB"/>
</dbReference>
<dbReference type="InterPro" id="IPR007215">
    <property type="entry name" value="Sulphur_relay_TusB/DsrH"/>
</dbReference>
<dbReference type="NCBIfam" id="NF010035">
    <property type="entry name" value="PRK13510.1"/>
    <property type="match status" value="1"/>
</dbReference>
<dbReference type="NCBIfam" id="TIGR03011">
    <property type="entry name" value="sulf_tusB_dsrH"/>
    <property type="match status" value="1"/>
</dbReference>
<dbReference type="PANTHER" id="PTHR37526">
    <property type="entry name" value="PROTEIN TUSB"/>
    <property type="match status" value="1"/>
</dbReference>
<dbReference type="PANTHER" id="PTHR37526:SF1">
    <property type="entry name" value="PROTEIN TUSB"/>
    <property type="match status" value="1"/>
</dbReference>
<dbReference type="Pfam" id="PF04077">
    <property type="entry name" value="DsrH"/>
    <property type="match status" value="1"/>
</dbReference>
<dbReference type="SUPFAM" id="SSF75169">
    <property type="entry name" value="DsrEFH-like"/>
    <property type="match status" value="1"/>
</dbReference>
<name>TUSB_SHIDS</name>
<keyword id="KW-0963">Cytoplasm</keyword>
<keyword id="KW-1185">Reference proteome</keyword>
<keyword id="KW-0819">tRNA processing</keyword>